<feature type="chain" id="PRO_1000056009" description="Large ribosomal subunit protein uL30">
    <location>
        <begin position="1"/>
        <end position="58"/>
    </location>
</feature>
<gene>
    <name evidence="1" type="primary">rpmD</name>
    <name type="ordered locus">BVU_0787</name>
</gene>
<reference key="1">
    <citation type="journal article" date="2007" name="PLoS Biol.">
        <title>Evolution of symbiotic bacteria in the distal human intestine.</title>
        <authorList>
            <person name="Xu J."/>
            <person name="Mahowald M.A."/>
            <person name="Ley R.E."/>
            <person name="Lozupone C.A."/>
            <person name="Hamady M."/>
            <person name="Martens E.C."/>
            <person name="Henrissat B."/>
            <person name="Coutinho P.M."/>
            <person name="Minx P."/>
            <person name="Latreille P."/>
            <person name="Cordum H."/>
            <person name="Van Brunt A."/>
            <person name="Kim K."/>
            <person name="Fulton R.S."/>
            <person name="Fulton L.A."/>
            <person name="Clifton S.W."/>
            <person name="Wilson R.K."/>
            <person name="Knight R.D."/>
            <person name="Gordon J.I."/>
        </authorList>
    </citation>
    <scope>NUCLEOTIDE SEQUENCE [LARGE SCALE GENOMIC DNA]</scope>
    <source>
        <strain>ATCC 8482 / DSM 1447 / JCM 5826 / CCUG 4940 / NBRC 14291 / NCTC 11154</strain>
    </source>
</reference>
<sequence length="58" mass="6433">MSTIKIKQVKSRIGAPADQKRVLDALGLRKMNRVVEHEATPSILGMVEKVKHLVAIVK</sequence>
<keyword id="KW-0687">Ribonucleoprotein</keyword>
<keyword id="KW-0689">Ribosomal protein</keyword>
<name>RL30_PHOV8</name>
<comment type="subunit">
    <text evidence="1">Part of the 50S ribosomal subunit.</text>
</comment>
<comment type="similarity">
    <text evidence="1">Belongs to the universal ribosomal protein uL30 family.</text>
</comment>
<dbReference type="EMBL" id="CP000139">
    <property type="protein sequence ID" value="ABR38491.1"/>
    <property type="molecule type" value="Genomic_DNA"/>
</dbReference>
<dbReference type="RefSeq" id="WP_005844887.1">
    <property type="nucleotide sequence ID" value="NZ_JANSWM010000035.1"/>
</dbReference>
<dbReference type="SMR" id="A6KYH7"/>
<dbReference type="STRING" id="435590.BVU_0787"/>
<dbReference type="PaxDb" id="435590-BVU_0787"/>
<dbReference type="GeneID" id="82155743"/>
<dbReference type="KEGG" id="bvu:BVU_0787"/>
<dbReference type="eggNOG" id="COG1841">
    <property type="taxonomic scope" value="Bacteria"/>
</dbReference>
<dbReference type="HOGENOM" id="CLU_131047_1_1_10"/>
<dbReference type="BioCyc" id="BVUL435590:G1G59-829-MONOMER"/>
<dbReference type="Proteomes" id="UP000002861">
    <property type="component" value="Chromosome"/>
</dbReference>
<dbReference type="GO" id="GO:0022625">
    <property type="term" value="C:cytosolic large ribosomal subunit"/>
    <property type="evidence" value="ECO:0007669"/>
    <property type="project" value="TreeGrafter"/>
</dbReference>
<dbReference type="GO" id="GO:0003735">
    <property type="term" value="F:structural constituent of ribosome"/>
    <property type="evidence" value="ECO:0007669"/>
    <property type="project" value="InterPro"/>
</dbReference>
<dbReference type="GO" id="GO:0006412">
    <property type="term" value="P:translation"/>
    <property type="evidence" value="ECO:0007669"/>
    <property type="project" value="UniProtKB-UniRule"/>
</dbReference>
<dbReference type="CDD" id="cd01658">
    <property type="entry name" value="Ribosomal_L30"/>
    <property type="match status" value="1"/>
</dbReference>
<dbReference type="FunFam" id="3.30.1390.20:FF:000001">
    <property type="entry name" value="50S ribosomal protein L30"/>
    <property type="match status" value="1"/>
</dbReference>
<dbReference type="Gene3D" id="3.30.1390.20">
    <property type="entry name" value="Ribosomal protein L30, ferredoxin-like fold domain"/>
    <property type="match status" value="1"/>
</dbReference>
<dbReference type="HAMAP" id="MF_01371_B">
    <property type="entry name" value="Ribosomal_uL30_B"/>
    <property type="match status" value="1"/>
</dbReference>
<dbReference type="InterPro" id="IPR036919">
    <property type="entry name" value="Ribo_uL30_ferredoxin-like_sf"/>
</dbReference>
<dbReference type="InterPro" id="IPR005996">
    <property type="entry name" value="Ribosomal_uL30_bac-type"/>
</dbReference>
<dbReference type="InterPro" id="IPR016082">
    <property type="entry name" value="Ribosomal_uL30_ferredoxin-like"/>
</dbReference>
<dbReference type="NCBIfam" id="TIGR01308">
    <property type="entry name" value="rpmD_bact"/>
    <property type="match status" value="1"/>
</dbReference>
<dbReference type="PANTHER" id="PTHR15892:SF2">
    <property type="entry name" value="LARGE RIBOSOMAL SUBUNIT PROTEIN UL30M"/>
    <property type="match status" value="1"/>
</dbReference>
<dbReference type="PANTHER" id="PTHR15892">
    <property type="entry name" value="MITOCHONDRIAL RIBOSOMAL PROTEIN L30"/>
    <property type="match status" value="1"/>
</dbReference>
<dbReference type="Pfam" id="PF00327">
    <property type="entry name" value="Ribosomal_L30"/>
    <property type="match status" value="1"/>
</dbReference>
<dbReference type="PIRSF" id="PIRSF002211">
    <property type="entry name" value="Ribosomal_L30_bac-type"/>
    <property type="match status" value="1"/>
</dbReference>
<dbReference type="SUPFAM" id="SSF55129">
    <property type="entry name" value="Ribosomal protein L30p/L7e"/>
    <property type="match status" value="1"/>
</dbReference>
<accession>A6KYH7</accession>
<organism>
    <name type="scientific">Phocaeicola vulgatus (strain ATCC 8482 / DSM 1447 / JCM 5826 / CCUG 4940 / NBRC 14291 / NCTC 11154)</name>
    <name type="common">Bacteroides vulgatus</name>
    <dbReference type="NCBI Taxonomy" id="435590"/>
    <lineage>
        <taxon>Bacteria</taxon>
        <taxon>Pseudomonadati</taxon>
        <taxon>Bacteroidota</taxon>
        <taxon>Bacteroidia</taxon>
        <taxon>Bacteroidales</taxon>
        <taxon>Bacteroidaceae</taxon>
        <taxon>Phocaeicola</taxon>
    </lineage>
</organism>
<protein>
    <recommendedName>
        <fullName evidence="1">Large ribosomal subunit protein uL30</fullName>
    </recommendedName>
    <alternativeName>
        <fullName evidence="2">50S ribosomal protein L30</fullName>
    </alternativeName>
</protein>
<evidence type="ECO:0000255" key="1">
    <source>
        <dbReference type="HAMAP-Rule" id="MF_01371"/>
    </source>
</evidence>
<evidence type="ECO:0000305" key="2"/>
<proteinExistence type="inferred from homology"/>